<evidence type="ECO:0000255" key="1">
    <source>
        <dbReference type="HAMAP-Rule" id="MF_00201"/>
    </source>
</evidence>
<reference key="1">
    <citation type="journal article" date="2007" name="BMC Microbiol.">
        <title>Subtle genetic changes enhance virulence of methicillin resistant and sensitive Staphylococcus aureus.</title>
        <authorList>
            <person name="Highlander S.K."/>
            <person name="Hulten K.G."/>
            <person name="Qin X."/>
            <person name="Jiang H."/>
            <person name="Yerrapragada S."/>
            <person name="Mason E.O. Jr."/>
            <person name="Shang Y."/>
            <person name="Williams T.M."/>
            <person name="Fortunov R.M."/>
            <person name="Liu Y."/>
            <person name="Igboeli O."/>
            <person name="Petrosino J."/>
            <person name="Tirumalai M."/>
            <person name="Uzman A."/>
            <person name="Fox G.E."/>
            <person name="Cardenas A.M."/>
            <person name="Muzny D.M."/>
            <person name="Hemphill L."/>
            <person name="Ding Y."/>
            <person name="Dugan S."/>
            <person name="Blyth P.R."/>
            <person name="Buhay C.J."/>
            <person name="Dinh H.H."/>
            <person name="Hawes A.C."/>
            <person name="Holder M."/>
            <person name="Kovar C.L."/>
            <person name="Lee S.L."/>
            <person name="Liu W."/>
            <person name="Nazareth L.V."/>
            <person name="Wang Q."/>
            <person name="Zhou J."/>
            <person name="Kaplan S.L."/>
            <person name="Weinstock G.M."/>
        </authorList>
    </citation>
    <scope>NUCLEOTIDE SEQUENCE [LARGE SCALE GENOMIC DNA]</scope>
    <source>
        <strain>USA300 / TCH1516</strain>
    </source>
</reference>
<sequence length="250" mass="28450">MLMRQKGIIIKAVDYGESDKIITILNEHGAKVPLMARRAKKVKTGLQAQTQLFVYGLFIYNQWRGMGTLNSVDVISQHYKLQMDLYVSSYAALAAETIERSMDEGDIAPYNYQLLQFVLEKIESGTSAQLMSVVVMLKCMKRFGFTASFNRCAVSGNDTQADLIGYSFKFDGAISRQEASKDVHAVILSNKTLYLLDVLQKLPIDKMNSLNIHQEIIDEMSDIILMLYREYAGMFFKSQKLINQLKRLEQ</sequence>
<protein>
    <recommendedName>
        <fullName evidence="1">DNA repair protein RecO</fullName>
    </recommendedName>
    <alternativeName>
        <fullName evidence="1">Recombination protein O</fullName>
    </alternativeName>
</protein>
<feature type="chain" id="PRO_1000077737" description="DNA repair protein RecO">
    <location>
        <begin position="1"/>
        <end position="250"/>
    </location>
</feature>
<proteinExistence type="inferred from homology"/>
<comment type="function">
    <text evidence="1">Involved in DNA repair and RecF pathway recombination.</text>
</comment>
<comment type="similarity">
    <text evidence="1">Belongs to the RecO family.</text>
</comment>
<accession>A8Z4A5</accession>
<gene>
    <name evidence="1" type="primary">recO</name>
    <name type="ordered locus">USA300HOU_1567</name>
</gene>
<dbReference type="EMBL" id="CP000730">
    <property type="protein sequence ID" value="ABX29574.1"/>
    <property type="molecule type" value="Genomic_DNA"/>
</dbReference>
<dbReference type="SMR" id="A8Z4A5"/>
<dbReference type="KEGG" id="sax:USA300HOU_1567"/>
<dbReference type="HOGENOM" id="CLU_066632_4_0_9"/>
<dbReference type="GO" id="GO:0043590">
    <property type="term" value="C:bacterial nucleoid"/>
    <property type="evidence" value="ECO:0007669"/>
    <property type="project" value="TreeGrafter"/>
</dbReference>
<dbReference type="GO" id="GO:0006310">
    <property type="term" value="P:DNA recombination"/>
    <property type="evidence" value="ECO:0007669"/>
    <property type="project" value="UniProtKB-UniRule"/>
</dbReference>
<dbReference type="GO" id="GO:0006302">
    <property type="term" value="P:double-strand break repair"/>
    <property type="evidence" value="ECO:0007669"/>
    <property type="project" value="TreeGrafter"/>
</dbReference>
<dbReference type="Gene3D" id="2.40.50.140">
    <property type="entry name" value="Nucleic acid-binding proteins"/>
    <property type="match status" value="1"/>
</dbReference>
<dbReference type="Gene3D" id="1.20.1440.120">
    <property type="entry name" value="Recombination protein O, C-terminal domain"/>
    <property type="match status" value="1"/>
</dbReference>
<dbReference type="HAMAP" id="MF_00201">
    <property type="entry name" value="RecO"/>
    <property type="match status" value="1"/>
</dbReference>
<dbReference type="InterPro" id="IPR037278">
    <property type="entry name" value="ARFGAP/RecO"/>
</dbReference>
<dbReference type="InterPro" id="IPR022572">
    <property type="entry name" value="DNA_rep/recomb_RecO_N"/>
</dbReference>
<dbReference type="InterPro" id="IPR012340">
    <property type="entry name" value="NA-bd_OB-fold"/>
</dbReference>
<dbReference type="InterPro" id="IPR003717">
    <property type="entry name" value="RecO"/>
</dbReference>
<dbReference type="InterPro" id="IPR042242">
    <property type="entry name" value="RecO_C"/>
</dbReference>
<dbReference type="NCBIfam" id="TIGR00613">
    <property type="entry name" value="reco"/>
    <property type="match status" value="1"/>
</dbReference>
<dbReference type="PANTHER" id="PTHR33991">
    <property type="entry name" value="DNA REPAIR PROTEIN RECO"/>
    <property type="match status" value="1"/>
</dbReference>
<dbReference type="PANTHER" id="PTHR33991:SF1">
    <property type="entry name" value="DNA REPAIR PROTEIN RECO"/>
    <property type="match status" value="1"/>
</dbReference>
<dbReference type="Pfam" id="PF02565">
    <property type="entry name" value="RecO_C"/>
    <property type="match status" value="1"/>
</dbReference>
<dbReference type="Pfam" id="PF11967">
    <property type="entry name" value="RecO_N"/>
    <property type="match status" value="1"/>
</dbReference>
<dbReference type="SUPFAM" id="SSF57863">
    <property type="entry name" value="ArfGap/RecO-like zinc finger"/>
    <property type="match status" value="1"/>
</dbReference>
<dbReference type="SUPFAM" id="SSF50249">
    <property type="entry name" value="Nucleic acid-binding proteins"/>
    <property type="match status" value="1"/>
</dbReference>
<organism>
    <name type="scientific">Staphylococcus aureus (strain USA300 / TCH1516)</name>
    <dbReference type="NCBI Taxonomy" id="451516"/>
    <lineage>
        <taxon>Bacteria</taxon>
        <taxon>Bacillati</taxon>
        <taxon>Bacillota</taxon>
        <taxon>Bacilli</taxon>
        <taxon>Bacillales</taxon>
        <taxon>Staphylococcaceae</taxon>
        <taxon>Staphylococcus</taxon>
    </lineage>
</organism>
<keyword id="KW-0227">DNA damage</keyword>
<keyword id="KW-0233">DNA recombination</keyword>
<keyword id="KW-0234">DNA repair</keyword>
<name>RECO_STAAT</name>